<dbReference type="EMBL" id="AL132957">
    <property type="protein sequence ID" value="CAB70983.1"/>
    <property type="molecule type" value="Genomic_DNA"/>
</dbReference>
<dbReference type="EMBL" id="CP002686">
    <property type="protein sequence ID" value="AEE79187.1"/>
    <property type="molecule type" value="Genomic_DNA"/>
</dbReference>
<dbReference type="EMBL" id="AY093161">
    <property type="protein sequence ID" value="AAM13160.1"/>
    <property type="molecule type" value="mRNA"/>
</dbReference>
<dbReference type="EMBL" id="AY128817">
    <property type="protein sequence ID" value="AAM91217.1"/>
    <property type="molecule type" value="mRNA"/>
</dbReference>
<dbReference type="PIR" id="T47568">
    <property type="entry name" value="T47568"/>
</dbReference>
<dbReference type="RefSeq" id="NP_190977.1">
    <property type="nucleotide sequence ID" value="NM_115269.4"/>
</dbReference>
<dbReference type="SMR" id="Q9M394"/>
<dbReference type="BioGRID" id="9893">
    <property type="interactions" value="3"/>
</dbReference>
<dbReference type="FunCoup" id="Q9M394">
    <property type="interactions" value="457"/>
</dbReference>
<dbReference type="IntAct" id="Q9M394">
    <property type="interactions" value="1"/>
</dbReference>
<dbReference type="STRING" id="3702.Q9M394"/>
<dbReference type="iPTMnet" id="Q9M394"/>
<dbReference type="PaxDb" id="3702-AT3G54090.1"/>
<dbReference type="ProteomicsDB" id="232800"/>
<dbReference type="EnsemblPlants" id="AT3G54090.1">
    <property type="protein sequence ID" value="AT3G54090.1"/>
    <property type="gene ID" value="AT3G54090"/>
</dbReference>
<dbReference type="GeneID" id="824576"/>
<dbReference type="Gramene" id="AT3G54090.1">
    <property type="protein sequence ID" value="AT3G54090.1"/>
    <property type="gene ID" value="AT3G54090"/>
</dbReference>
<dbReference type="KEGG" id="ath:AT3G54090"/>
<dbReference type="Araport" id="AT3G54090"/>
<dbReference type="TAIR" id="AT3G54090">
    <property type="gene designation" value="FLN1"/>
</dbReference>
<dbReference type="eggNOG" id="KOG2855">
    <property type="taxonomic scope" value="Eukaryota"/>
</dbReference>
<dbReference type="HOGENOM" id="CLU_023435_1_0_1"/>
<dbReference type="InParanoid" id="Q9M394"/>
<dbReference type="OMA" id="LRIHYYS"/>
<dbReference type="OrthoDB" id="415590at2759"/>
<dbReference type="PhylomeDB" id="Q9M394"/>
<dbReference type="BioCyc" id="ARA:AT3G54090-MONOMER"/>
<dbReference type="PRO" id="PR:Q9M394"/>
<dbReference type="Proteomes" id="UP000006548">
    <property type="component" value="Chromosome 3"/>
</dbReference>
<dbReference type="ExpressionAtlas" id="Q9M394">
    <property type="expression patterns" value="baseline and differential"/>
</dbReference>
<dbReference type="GO" id="GO:0042644">
    <property type="term" value="C:chloroplast nucleoid"/>
    <property type="evidence" value="ECO:0000314"/>
    <property type="project" value="TAIR"/>
</dbReference>
<dbReference type="GO" id="GO:0005737">
    <property type="term" value="C:cytoplasm"/>
    <property type="evidence" value="ECO:0007005"/>
    <property type="project" value="TAIR"/>
</dbReference>
<dbReference type="GO" id="GO:0005634">
    <property type="term" value="C:nucleus"/>
    <property type="evidence" value="ECO:0007005"/>
    <property type="project" value="TAIR"/>
</dbReference>
<dbReference type="GO" id="GO:0016301">
    <property type="term" value="F:kinase activity"/>
    <property type="evidence" value="ECO:0007669"/>
    <property type="project" value="UniProtKB-KW"/>
</dbReference>
<dbReference type="GO" id="GO:0009658">
    <property type="term" value="P:chloroplast organization"/>
    <property type="evidence" value="ECO:0000315"/>
    <property type="project" value="TAIR"/>
</dbReference>
<dbReference type="GO" id="GO:0042793">
    <property type="term" value="P:plastid transcription"/>
    <property type="evidence" value="ECO:0000315"/>
    <property type="project" value="TAIR"/>
</dbReference>
<dbReference type="CDD" id="cd01167">
    <property type="entry name" value="bac_FRK"/>
    <property type="match status" value="1"/>
</dbReference>
<dbReference type="FunFam" id="3.40.1190.20:FF:000021">
    <property type="entry name" value="Fructokinase-like 2, chloroplastic"/>
    <property type="match status" value="1"/>
</dbReference>
<dbReference type="Gene3D" id="3.40.1190.20">
    <property type="match status" value="1"/>
</dbReference>
<dbReference type="InterPro" id="IPR002173">
    <property type="entry name" value="Carboh/pur_kinase_PfkB_CS"/>
</dbReference>
<dbReference type="InterPro" id="IPR050306">
    <property type="entry name" value="PfkB_Carbo_kinase"/>
</dbReference>
<dbReference type="InterPro" id="IPR011611">
    <property type="entry name" value="PfkB_dom"/>
</dbReference>
<dbReference type="InterPro" id="IPR029056">
    <property type="entry name" value="Ribokinase-like"/>
</dbReference>
<dbReference type="PANTHER" id="PTHR43085:SF10">
    <property type="entry name" value="FRUCTOKINASE-LIKE 1, CHLOROPLASTIC"/>
    <property type="match status" value="1"/>
</dbReference>
<dbReference type="PANTHER" id="PTHR43085">
    <property type="entry name" value="HEXOKINASE FAMILY MEMBER"/>
    <property type="match status" value="1"/>
</dbReference>
<dbReference type="Pfam" id="PF00294">
    <property type="entry name" value="PfkB"/>
    <property type="match status" value="1"/>
</dbReference>
<dbReference type="SUPFAM" id="SSF53613">
    <property type="entry name" value="Ribokinase-like"/>
    <property type="match status" value="1"/>
</dbReference>
<dbReference type="PROSITE" id="PS00583">
    <property type="entry name" value="PFKB_KINASES_1"/>
    <property type="match status" value="1"/>
</dbReference>
<proteinExistence type="evidence at protein level"/>
<protein>
    <recommendedName>
        <fullName evidence="13">Fructokinase-like 1, chloroplastic</fullName>
    </recommendedName>
    <alternativeName>
        <fullName evidence="10">PEP-associated protein 6</fullName>
    </alternativeName>
    <alternativeName>
        <fullName evidence="9">pfkB-type carbohydrate kinase family protein 2</fullName>
    </alternativeName>
</protein>
<organism>
    <name type="scientific">Arabidopsis thaliana</name>
    <name type="common">Mouse-ear cress</name>
    <dbReference type="NCBI Taxonomy" id="3702"/>
    <lineage>
        <taxon>Eukaryota</taxon>
        <taxon>Viridiplantae</taxon>
        <taxon>Streptophyta</taxon>
        <taxon>Embryophyta</taxon>
        <taxon>Tracheophyta</taxon>
        <taxon>Spermatophyta</taxon>
        <taxon>Magnoliopsida</taxon>
        <taxon>eudicotyledons</taxon>
        <taxon>Gunneridae</taxon>
        <taxon>Pentapetalae</taxon>
        <taxon>rosids</taxon>
        <taxon>malvids</taxon>
        <taxon>Brassicales</taxon>
        <taxon>Brassicaceae</taxon>
        <taxon>Camelineae</taxon>
        <taxon>Arabidopsis</taxon>
    </lineage>
</organism>
<comment type="function">
    <text evidence="3 4 5 6">Required for proper chloroplast development, most likely through regulating plastid-encoded polymerase (PEP) dependent chloroplast transcription. Acts as a component of the transcriptionally active plastid chromosome that is required for plastid gene expression.</text>
</comment>
<comment type="subunit">
    <text evidence="4 7 8">Interacts with CITRX/TRXz (PubMed:20511297). Interacts with PTAC7 (PubMed:23082802). Self-interacts. Binds to FLN2. Associates with the plastid-encoded RNA polymerase (PEP) complex (PubMed:24019900).</text>
</comment>
<comment type="interaction">
    <interactant intactId="EBI-9823647">
        <id>Q9M394</id>
    </interactant>
    <interactant intactId="EBI-9823626">
        <id>Q9M7X9</id>
        <label>CITRX</label>
    </interactant>
    <organismsDiffer>false</organismsDiffer>
    <experiments>3</experiments>
</comment>
<comment type="subcellular location">
    <subcellularLocation>
        <location evidence="4">Plastid</location>
        <location evidence="4">Chloroplast</location>
    </subcellularLocation>
</comment>
<comment type="disruption phenotype">
    <text evidence="5 6">Albino seedlings leading to lethality.</text>
</comment>
<comment type="miscellaneous">
    <text evidence="4">RNAi plants display abnormal plastids lacking internal membrane structures.</text>
</comment>
<comment type="similarity">
    <text evidence="11">Belongs to the carbohydrate kinase PfkB family.</text>
</comment>
<gene>
    <name evidence="13" type="primary">FLN1</name>
    <name evidence="10" type="synonym">PAP6</name>
    <name evidence="9" type="synonym">PFKB2</name>
    <name evidence="12" type="ordered locus">At3g54090</name>
    <name evidence="14" type="ORF">F24B22.50</name>
</gene>
<sequence length="471" mass="53781">MASLLIFPHLHHFDSSLDRREVLVVRHSQASRRFLTPKASINGSGITNGAAAETTSKPSRKGRKKKQTSTVIEKDNTETDPELNPELADYDDGIEFPYDDPPLVCCFGAVQKEFVPVVRVHDNPMHPDMYSQWKMLQWDPPEFGRAPGGPPSNVAISHVRLGGRAAFMGKVGEDDFGDELVLMMNQERVQTRAVKFDENSKTACTRVKIKFKDGKMMAETVKEPPEDSLFASELNLAVLKEARIFHFNSEVLTSPTMQSTLFTAIQWSKKFGGLIFFDLNLPLPLWRSRNETRKLIKKAWNEANIIEVSQQELEFLLDEDYYERRRNYTPQYFAEDFDQTKNRRDYYHYTPEEIKSLWHDKLKLLVVTDGTLRLHYYTPTFDGVVIGTEDVLITPFTCDRTGSGDAVVAGIMRKLTTCPEMFEDQDVMERQLRFAVAAGIIAQWTIGAVRGFPTESATQNLKEQVYVPSMW</sequence>
<name>SCKL1_ARATH</name>
<evidence type="ECO:0000255" key="1"/>
<evidence type="ECO:0000256" key="2">
    <source>
        <dbReference type="SAM" id="MobiDB-lite"/>
    </source>
</evidence>
<evidence type="ECO:0000269" key="3">
    <source>
    </source>
</evidence>
<evidence type="ECO:0000269" key="4">
    <source>
    </source>
</evidence>
<evidence type="ECO:0000269" key="5">
    <source>
    </source>
</evidence>
<evidence type="ECO:0000269" key="6">
    <source>
    </source>
</evidence>
<evidence type="ECO:0000269" key="7">
    <source>
    </source>
</evidence>
<evidence type="ECO:0000269" key="8">
    <source>
    </source>
</evidence>
<evidence type="ECO:0000303" key="9">
    <source>
    </source>
</evidence>
<evidence type="ECO:0000303" key="10">
    <source>
    </source>
</evidence>
<evidence type="ECO:0000305" key="11"/>
<evidence type="ECO:0000312" key="12">
    <source>
        <dbReference type="Araport" id="AT3G54090"/>
    </source>
</evidence>
<evidence type="ECO:0000312" key="13">
    <source>
        <dbReference type="EMBL" id="AEE79187.1"/>
    </source>
</evidence>
<evidence type="ECO:0000312" key="14">
    <source>
        <dbReference type="EMBL" id="CAB70983.1"/>
    </source>
</evidence>
<accession>Q9M394</accession>
<reference key="1">
    <citation type="journal article" date="2000" name="Nature">
        <title>Sequence and analysis of chromosome 3 of the plant Arabidopsis thaliana.</title>
        <authorList>
            <person name="Salanoubat M."/>
            <person name="Lemcke K."/>
            <person name="Rieger M."/>
            <person name="Ansorge W."/>
            <person name="Unseld M."/>
            <person name="Fartmann B."/>
            <person name="Valle G."/>
            <person name="Bloecker H."/>
            <person name="Perez-Alonso M."/>
            <person name="Obermaier B."/>
            <person name="Delseny M."/>
            <person name="Boutry M."/>
            <person name="Grivell L.A."/>
            <person name="Mache R."/>
            <person name="Puigdomenech P."/>
            <person name="De Simone V."/>
            <person name="Choisne N."/>
            <person name="Artiguenave F."/>
            <person name="Robert C."/>
            <person name="Brottier P."/>
            <person name="Wincker P."/>
            <person name="Cattolico L."/>
            <person name="Weissenbach J."/>
            <person name="Saurin W."/>
            <person name="Quetier F."/>
            <person name="Schaefer M."/>
            <person name="Mueller-Auer S."/>
            <person name="Gabel C."/>
            <person name="Fuchs M."/>
            <person name="Benes V."/>
            <person name="Wurmbach E."/>
            <person name="Drzonek H."/>
            <person name="Erfle H."/>
            <person name="Jordan N."/>
            <person name="Bangert S."/>
            <person name="Wiedelmann R."/>
            <person name="Kranz H."/>
            <person name="Voss H."/>
            <person name="Holland R."/>
            <person name="Brandt P."/>
            <person name="Nyakatura G."/>
            <person name="Vezzi A."/>
            <person name="D'Angelo M."/>
            <person name="Pallavicini A."/>
            <person name="Toppo S."/>
            <person name="Simionati B."/>
            <person name="Conrad A."/>
            <person name="Hornischer K."/>
            <person name="Kauer G."/>
            <person name="Loehnert T.-H."/>
            <person name="Nordsiek G."/>
            <person name="Reichelt J."/>
            <person name="Scharfe M."/>
            <person name="Schoen O."/>
            <person name="Bargues M."/>
            <person name="Terol J."/>
            <person name="Climent J."/>
            <person name="Navarro P."/>
            <person name="Collado C."/>
            <person name="Perez-Perez A."/>
            <person name="Ottenwaelder B."/>
            <person name="Duchemin D."/>
            <person name="Cooke R."/>
            <person name="Laudie M."/>
            <person name="Berger-Llauro C."/>
            <person name="Purnelle B."/>
            <person name="Masuy D."/>
            <person name="de Haan M."/>
            <person name="Maarse A.C."/>
            <person name="Alcaraz J.-P."/>
            <person name="Cottet A."/>
            <person name="Casacuberta E."/>
            <person name="Monfort A."/>
            <person name="Argiriou A."/>
            <person name="Flores M."/>
            <person name="Liguori R."/>
            <person name="Vitale D."/>
            <person name="Mannhaupt G."/>
            <person name="Haase D."/>
            <person name="Schoof H."/>
            <person name="Rudd S."/>
            <person name="Zaccaria P."/>
            <person name="Mewes H.-W."/>
            <person name="Mayer K.F.X."/>
            <person name="Kaul S."/>
            <person name="Town C.D."/>
            <person name="Koo H.L."/>
            <person name="Tallon L.J."/>
            <person name="Jenkins J."/>
            <person name="Rooney T."/>
            <person name="Rizzo M."/>
            <person name="Walts A."/>
            <person name="Utterback T."/>
            <person name="Fujii C.Y."/>
            <person name="Shea T.P."/>
            <person name="Creasy T.H."/>
            <person name="Haas B."/>
            <person name="Maiti R."/>
            <person name="Wu D."/>
            <person name="Peterson J."/>
            <person name="Van Aken S."/>
            <person name="Pai G."/>
            <person name="Militscher J."/>
            <person name="Sellers P."/>
            <person name="Gill J.E."/>
            <person name="Feldblyum T.V."/>
            <person name="Preuss D."/>
            <person name="Lin X."/>
            <person name="Nierman W.C."/>
            <person name="Salzberg S.L."/>
            <person name="White O."/>
            <person name="Venter J.C."/>
            <person name="Fraser C.M."/>
            <person name="Kaneko T."/>
            <person name="Nakamura Y."/>
            <person name="Sato S."/>
            <person name="Kato T."/>
            <person name="Asamizu E."/>
            <person name="Sasamoto S."/>
            <person name="Kimura T."/>
            <person name="Idesawa K."/>
            <person name="Kawashima K."/>
            <person name="Kishida Y."/>
            <person name="Kiyokawa C."/>
            <person name="Kohara M."/>
            <person name="Matsumoto M."/>
            <person name="Matsuno A."/>
            <person name="Muraki A."/>
            <person name="Nakayama S."/>
            <person name="Nakazaki N."/>
            <person name="Shinpo S."/>
            <person name="Takeuchi C."/>
            <person name="Wada T."/>
            <person name="Watanabe A."/>
            <person name="Yamada M."/>
            <person name="Yasuda M."/>
            <person name="Tabata S."/>
        </authorList>
    </citation>
    <scope>NUCLEOTIDE SEQUENCE [LARGE SCALE GENOMIC DNA]</scope>
    <source>
        <strain>cv. Columbia</strain>
    </source>
</reference>
<reference key="2">
    <citation type="journal article" date="2017" name="Plant J.">
        <title>Araport11: a complete reannotation of the Arabidopsis thaliana reference genome.</title>
        <authorList>
            <person name="Cheng C.Y."/>
            <person name="Krishnakumar V."/>
            <person name="Chan A.P."/>
            <person name="Thibaud-Nissen F."/>
            <person name="Schobel S."/>
            <person name="Town C.D."/>
        </authorList>
    </citation>
    <scope>GENOME REANNOTATION</scope>
    <source>
        <strain>cv. Columbia</strain>
    </source>
</reference>
<reference key="3">
    <citation type="journal article" date="2003" name="Science">
        <title>Empirical analysis of transcriptional activity in the Arabidopsis genome.</title>
        <authorList>
            <person name="Yamada K."/>
            <person name="Lim J."/>
            <person name="Dale J.M."/>
            <person name="Chen H."/>
            <person name="Shinn P."/>
            <person name="Palm C.J."/>
            <person name="Southwick A.M."/>
            <person name="Wu H.C."/>
            <person name="Kim C.J."/>
            <person name="Nguyen M."/>
            <person name="Pham P.K."/>
            <person name="Cheuk R.F."/>
            <person name="Karlin-Newmann G."/>
            <person name="Liu S.X."/>
            <person name="Lam B."/>
            <person name="Sakano H."/>
            <person name="Wu T."/>
            <person name="Yu G."/>
            <person name="Miranda M."/>
            <person name="Quach H.L."/>
            <person name="Tripp M."/>
            <person name="Chang C.H."/>
            <person name="Lee J.M."/>
            <person name="Toriumi M.J."/>
            <person name="Chan M.M."/>
            <person name="Tang C.C."/>
            <person name="Onodera C.S."/>
            <person name="Deng J.M."/>
            <person name="Akiyama K."/>
            <person name="Ansari Y."/>
            <person name="Arakawa T."/>
            <person name="Banh J."/>
            <person name="Banno F."/>
            <person name="Bowser L."/>
            <person name="Brooks S.Y."/>
            <person name="Carninci P."/>
            <person name="Chao Q."/>
            <person name="Choy N."/>
            <person name="Enju A."/>
            <person name="Goldsmith A.D."/>
            <person name="Gurjal M."/>
            <person name="Hansen N.F."/>
            <person name="Hayashizaki Y."/>
            <person name="Johnson-Hopson C."/>
            <person name="Hsuan V.W."/>
            <person name="Iida K."/>
            <person name="Karnes M."/>
            <person name="Khan S."/>
            <person name="Koesema E."/>
            <person name="Ishida J."/>
            <person name="Jiang P.X."/>
            <person name="Jones T."/>
            <person name="Kawai J."/>
            <person name="Kamiya A."/>
            <person name="Meyers C."/>
            <person name="Nakajima M."/>
            <person name="Narusaka M."/>
            <person name="Seki M."/>
            <person name="Sakurai T."/>
            <person name="Satou M."/>
            <person name="Tamse R."/>
            <person name="Vaysberg M."/>
            <person name="Wallender E.K."/>
            <person name="Wong C."/>
            <person name="Yamamura Y."/>
            <person name="Yuan S."/>
            <person name="Shinozaki K."/>
            <person name="Davis R.W."/>
            <person name="Theologis A."/>
            <person name="Ecker J.R."/>
        </authorList>
    </citation>
    <scope>NUCLEOTIDE SEQUENCE [LARGE SCALE MRNA]</scope>
    <source>
        <strain>cv. Columbia</strain>
    </source>
</reference>
<reference key="4">
    <citation type="journal article" date="2006" name="Plant Cell">
        <title>pTAC2, -6, and -12 are components of the transcriptionally active plastid chromosome that are required for plastid gene expression.</title>
        <authorList>
            <person name="Pfalz J."/>
            <person name="Liere K."/>
            <person name="Kandlbinder A."/>
            <person name="Dietz K.-J."/>
            <person name="Oelmueller R."/>
        </authorList>
    </citation>
    <scope>FUNCTION</scope>
    <scope>IDENTIFICATION BY MASS SPECTROMETRY</scope>
</reference>
<reference key="5">
    <citation type="journal article" date="2010" name="Plant Cell">
        <title>Plastidial thioredoxin z interacts with two fructokinase-like proteins in a thiol-dependent manner: evidence for an essential role in chloroplast development in Arabidopsis and Nicotiana benthamiana.</title>
        <authorList>
            <person name="Arsova B."/>
            <person name="Hoja U."/>
            <person name="Wimmelbacher M."/>
            <person name="Greiner E."/>
            <person name="Ustun S."/>
            <person name="Melzer M."/>
            <person name="Petersen K."/>
            <person name="Lein W."/>
            <person name="Bornke F."/>
        </authorList>
    </citation>
    <scope>FUNCTION</scope>
    <scope>INTERACTION WITH CITRX</scope>
    <scope>SUBCELLULAR LOCATION</scope>
    <scope>MUTAGENESIS OF CYS-105; CYS-106 AND 105-CYS-CYS-106</scope>
</reference>
<reference key="6">
    <citation type="journal article" date="2011" name="Plant Physiol.">
        <title>Identification of essential subunits in the plastid-encoded RNA polymerase complex reveals building blocks for proper plastid development.</title>
        <authorList>
            <person name="Steiner S."/>
            <person name="Schroeter Y."/>
            <person name="Pfalz J."/>
            <person name="Pfannschmidt T."/>
        </authorList>
    </citation>
    <scope>FUNCTION</scope>
    <scope>IDENTIFICATION BY MASS SPECTROMETRY</scope>
    <scope>DISRUPTION PHENOTYPE</scope>
</reference>
<reference key="7">
    <citation type="journal article" date="2012" name="BMC Plant Biol.">
        <title>The plastid-localized pfkB-type carbohydrate kinases FRUCTOKINASE-LIKE 1 and 2 are essential for growth and development of Arabidopsis thaliana.</title>
        <authorList>
            <person name="Gilkerson J."/>
            <person name="Perez-Ruiz J.M."/>
            <person name="Chory J."/>
            <person name="Callis J."/>
        </authorList>
    </citation>
    <scope>DISRUPTION PHENOTYPE</scope>
    <scope>FUNCTION</scope>
</reference>
<reference key="8">
    <citation type="journal article" date="2013" name="Physiol. Plantarum">
        <title>TAC7, an essential component of the plastid transcriptionally active chromosome complex, interacts with FLN1, TAC10, TAC12 and TAC14 to regulate chloroplast gene expression in Arabidopsis thaliana.</title>
        <authorList>
            <person name="Yu Q.-B."/>
            <person name="Lu Y."/>
            <person name="Ma Q."/>
            <person name="Zhao T.-T."/>
            <person name="Huang C."/>
            <person name="Zhao H.-F."/>
            <person name="Zhang X.-L."/>
            <person name="Lv R.-H."/>
            <person name="Yang Z.-N."/>
        </authorList>
    </citation>
    <scope>INTERACTION WITH PTAC7</scope>
</reference>
<reference key="9">
    <citation type="journal article" date="2013" name="PLoS ONE">
        <title>The reduced plastid-encoded polymerase-dependent plastid gene expression leads to the delayed greening of the Arabidopsis fln2 mutant.</title>
        <authorList>
            <person name="Huang C."/>
            <person name="Yu Q.-B."/>
            <person name="Lv R.-H."/>
            <person name="Yin Q.-Q."/>
            <person name="Chen G.-Y."/>
            <person name="Xu L."/>
            <person name="Yang Z.-N."/>
        </authorList>
    </citation>
    <scope>INTERACTION WITH FLN2</scope>
    <scope>HOMODIMERIZATION</scope>
    <source>
        <strain>cv. Columbia</strain>
    </source>
</reference>
<keyword id="KW-0150">Chloroplast</keyword>
<keyword id="KW-0418">Kinase</keyword>
<keyword id="KW-0934">Plastid</keyword>
<keyword id="KW-1185">Reference proteome</keyword>
<keyword id="KW-0808">Transferase</keyword>
<keyword id="KW-0809">Transit peptide</keyword>
<feature type="transit peptide" description="Chloroplast" evidence="1">
    <location>
        <begin position="1"/>
        <end position="38"/>
    </location>
</feature>
<feature type="chain" id="PRO_0000430869" description="Fructokinase-like 1, chloroplastic">
    <location>
        <begin position="39"/>
        <end position="471"/>
    </location>
</feature>
<feature type="region of interest" description="Disordered" evidence="2">
    <location>
        <begin position="36"/>
        <end position="85"/>
    </location>
</feature>
<feature type="compositionally biased region" description="Polar residues" evidence="2">
    <location>
        <begin position="39"/>
        <end position="57"/>
    </location>
</feature>
<feature type="compositionally biased region" description="Basic residues" evidence="2">
    <location>
        <begin position="58"/>
        <end position="67"/>
    </location>
</feature>
<feature type="mutagenesis site" description="Abolishes interaction with CITRX." evidence="4">
    <original>CC</original>
    <variation>AA</variation>
    <location>
        <begin position="105"/>
        <end position="106"/>
    </location>
</feature>
<feature type="mutagenesis site" description="Does not affect the interaction with CITRX." evidence="4">
    <original>C</original>
    <variation>A</variation>
    <location>
        <position position="105"/>
    </location>
</feature>
<feature type="mutagenesis site" description="Strongly reduces the interaction with CITRX." evidence="4">
    <original>C</original>
    <variation>A</variation>
    <location>
        <position position="106"/>
    </location>
</feature>